<comment type="function">
    <text>Complexes with metalloproteinases (such as collagenases) and irreversibly inactivates them by binding to their catalytic zinc cofactor.</text>
</comment>
<comment type="subcellular location">
    <subcellularLocation>
        <location>Secreted</location>
    </subcellularLocation>
</comment>
<comment type="tissue specificity">
    <text>Expressed in brain, heart, ovary and skeletal muscle.</text>
</comment>
<comment type="similarity">
    <text evidence="4">Belongs to the protease inhibitor I35 (TIMP) family.</text>
</comment>
<gene>
    <name type="primary">Timp4</name>
</gene>
<organism>
    <name type="scientific">Mus musculus</name>
    <name type="common">Mouse</name>
    <dbReference type="NCBI Taxonomy" id="10090"/>
    <lineage>
        <taxon>Eukaryota</taxon>
        <taxon>Metazoa</taxon>
        <taxon>Chordata</taxon>
        <taxon>Craniata</taxon>
        <taxon>Vertebrata</taxon>
        <taxon>Euteleostomi</taxon>
        <taxon>Mammalia</taxon>
        <taxon>Eutheria</taxon>
        <taxon>Euarchontoglires</taxon>
        <taxon>Glires</taxon>
        <taxon>Rodentia</taxon>
        <taxon>Myomorpha</taxon>
        <taxon>Muroidea</taxon>
        <taxon>Muridae</taxon>
        <taxon>Murinae</taxon>
        <taxon>Mus</taxon>
        <taxon>Mus</taxon>
    </lineage>
</organism>
<feature type="signal peptide" evidence="2">
    <location>
        <begin position="1"/>
        <end position="29"/>
    </location>
</feature>
<feature type="chain" id="PRO_0000034350" description="Metalloproteinase inhibitor 4">
    <location>
        <begin position="30"/>
        <end position="224"/>
    </location>
</feature>
<feature type="domain" description="NTR" evidence="3">
    <location>
        <begin position="30"/>
        <end position="156"/>
    </location>
</feature>
<feature type="region of interest" description="Involved in metalloproteinase-binding" evidence="1">
    <location>
        <begin position="30"/>
        <end position="33"/>
    </location>
</feature>
<feature type="region of interest" description="Involved in metalloproteinase-binding" evidence="1">
    <location>
        <begin position="99"/>
        <end position="100"/>
    </location>
</feature>
<feature type="binding site" evidence="1">
    <location>
        <position position="30"/>
    </location>
    <ligand>
        <name>Zn(2+)</name>
        <dbReference type="ChEBI" id="CHEBI:29105"/>
        <note>ligand shared with metalloproteinase partner</note>
    </ligand>
</feature>
<feature type="site" description="Involved in metalloproteinase-binding" evidence="1">
    <location>
        <position position="69"/>
    </location>
</feature>
<feature type="disulfide bond" evidence="3">
    <location>
        <begin position="30"/>
        <end position="102"/>
    </location>
</feature>
<feature type="disulfide bond" evidence="3">
    <location>
        <begin position="32"/>
        <end position="131"/>
    </location>
</feature>
<feature type="disulfide bond" evidence="3">
    <location>
        <begin position="42"/>
        <end position="156"/>
    </location>
</feature>
<feature type="disulfide bond" evidence="3">
    <location>
        <begin position="158"/>
        <end position="205"/>
    </location>
</feature>
<feature type="disulfide bond" evidence="3">
    <location>
        <begin position="163"/>
        <end position="168"/>
    </location>
</feature>
<feature type="disulfide bond" evidence="3">
    <location>
        <begin position="176"/>
        <end position="197"/>
    </location>
</feature>
<feature type="sequence conflict" description="In Ref. 2; AAK62886." evidence="4" ref="2">
    <original>GQILSD</original>
    <variation>ARFSG</variation>
    <location>
        <begin position="118"/>
        <end position="123"/>
    </location>
</feature>
<feature type="sequence conflict" description="In Ref. 2; AAK62886." evidence="4" ref="2">
    <original>LCNYIEPWE</original>
    <variation>FVPTYIKPWK</variation>
    <location>
        <begin position="130"/>
        <end position="138"/>
    </location>
</feature>
<feature type="sequence conflict" description="In Ref. 2; AAK62886." evidence="4" ref="2">
    <original>C</original>
    <variation>L</variation>
    <location>
        <position position="156"/>
    </location>
</feature>
<sequence>MPWSPLAALSWALVLRLLALLWPPGRGEACSCAPAHPQQHFCHSALVIRAKISSEKVVPASKDPADTQKLIRYEIKQIKMFKGFEKAKDIQYVYTPFDSSLCGVKLETNSHKQYLLTGQILSDGKVFIHLCNYIEPWEDLSLVQRESLNHHYHQNCGCQITTCYAVPCTISAPNECLWTDWLLERKLYGYQAQHYVCMKHVDGICSWYRGHLHLRKEYVDIIQP</sequence>
<proteinExistence type="evidence at transcript level"/>
<evidence type="ECO:0000250" key="1">
    <source>
        <dbReference type="UniProtKB" id="P16035"/>
    </source>
</evidence>
<evidence type="ECO:0000255" key="2"/>
<evidence type="ECO:0000255" key="3">
    <source>
        <dbReference type="PROSITE-ProRule" id="PRU00295"/>
    </source>
</evidence>
<evidence type="ECO:0000305" key="4"/>
<protein>
    <recommendedName>
        <fullName>Metalloproteinase inhibitor 4</fullName>
    </recommendedName>
    <alternativeName>
        <fullName>Tissue inhibitor of metalloproteinases 4</fullName>
        <shortName>TIMP-4</shortName>
    </alternativeName>
</protein>
<accession>Q9JHB3</accession>
<accession>Q924B7</accession>
<keyword id="KW-1015">Disulfide bond</keyword>
<keyword id="KW-0479">Metal-binding</keyword>
<keyword id="KW-0481">Metalloenzyme inhibitor</keyword>
<keyword id="KW-0483">Metalloprotease inhibitor</keyword>
<keyword id="KW-0646">Protease inhibitor</keyword>
<keyword id="KW-1185">Reference proteome</keyword>
<keyword id="KW-0964">Secreted</keyword>
<keyword id="KW-0732">Signal</keyword>
<keyword id="KW-0862">Zinc</keyword>
<name>TIMP4_MOUSE</name>
<reference key="1">
    <citation type="journal article" date="1997" name="FEBS Lett.">
        <title>Murine tissue inhibitor of metalloproteinases-4 (Timp-4): cDNA isolation and expression in adult mouse tissues.</title>
        <authorList>
            <person name="Leco K.J."/>
            <person name="Apte S.S."/>
            <person name="Taniguchi G.T."/>
            <person name="Hawkes S.P."/>
            <person name="Khokha R."/>
            <person name="Schultz G.A."/>
            <person name="Edwards D.R."/>
        </authorList>
    </citation>
    <scope>NUCLEOTIDE SEQUENCE [MRNA]</scope>
    <source>
        <strain>CD-1</strain>
        <tissue>Brain</tissue>
        <tissue>Heart</tissue>
    </source>
</reference>
<reference key="2">
    <citation type="submission" date="2001-02" db="EMBL/GenBank/DDBJ databases">
        <authorList>
            <person name="Rahkonen O.P."/>
            <person name="Koskivirta I.M."/>
            <person name="Vuorio E.I."/>
        </authorList>
    </citation>
    <scope>NUCLEOTIDE SEQUENCE [GENOMIC DNA]</scope>
    <source>
        <strain>129/SvJ</strain>
    </source>
</reference>
<reference key="3">
    <citation type="journal article" date="2004" name="Genome Res.">
        <title>The status, quality, and expansion of the NIH full-length cDNA project: the Mammalian Gene Collection (MGC).</title>
        <authorList>
            <consortium name="The MGC Project Team"/>
        </authorList>
    </citation>
    <scope>NUCLEOTIDE SEQUENCE [LARGE SCALE MRNA]</scope>
    <source>
        <strain>C57BL/6J</strain>
        <tissue>Mammary gland</tissue>
    </source>
</reference>
<dbReference type="EMBL" id="AF282730">
    <property type="protein sequence ID" value="AAF97239.1"/>
    <property type="molecule type" value="mRNA"/>
</dbReference>
<dbReference type="EMBL" id="AF345865">
    <property type="protein sequence ID" value="AAK62886.1"/>
    <property type="molecule type" value="Genomic_DNA"/>
</dbReference>
<dbReference type="EMBL" id="AF345864">
    <property type="protein sequence ID" value="AAK62886.1"/>
    <property type="status" value="JOINED"/>
    <property type="molecule type" value="Genomic_DNA"/>
</dbReference>
<dbReference type="EMBL" id="BC064046">
    <property type="protein sequence ID" value="AAH64046.1"/>
    <property type="molecule type" value="mRNA"/>
</dbReference>
<dbReference type="CCDS" id="CCDS20438.1"/>
<dbReference type="RefSeq" id="NP_542370.3">
    <property type="nucleotide sequence ID" value="NM_080639.3"/>
</dbReference>
<dbReference type="SMR" id="Q9JHB3"/>
<dbReference type="BioGRID" id="225738">
    <property type="interactions" value="1"/>
</dbReference>
<dbReference type="FunCoup" id="Q9JHB3">
    <property type="interactions" value="34"/>
</dbReference>
<dbReference type="STRING" id="10090.ENSMUSP00000032462"/>
<dbReference type="MEROPS" id="I35.004"/>
<dbReference type="PhosphoSitePlus" id="Q9JHB3"/>
<dbReference type="PaxDb" id="10090-ENSMUSP00000032462"/>
<dbReference type="ProteomicsDB" id="259453"/>
<dbReference type="Antibodypedia" id="3455">
    <property type="antibodies" value="576 antibodies from 36 providers"/>
</dbReference>
<dbReference type="DNASU" id="110595"/>
<dbReference type="Ensembl" id="ENSMUST00000032462.9">
    <property type="protein sequence ID" value="ENSMUSP00000032462.7"/>
    <property type="gene ID" value="ENSMUSG00000030317.9"/>
</dbReference>
<dbReference type="GeneID" id="110595"/>
<dbReference type="KEGG" id="mmu:110595"/>
<dbReference type="UCSC" id="uc009dip.1">
    <property type="organism name" value="mouse"/>
</dbReference>
<dbReference type="AGR" id="MGI:109125"/>
<dbReference type="CTD" id="7079"/>
<dbReference type="MGI" id="MGI:109125">
    <property type="gene designation" value="Timp4"/>
</dbReference>
<dbReference type="VEuPathDB" id="HostDB:ENSMUSG00000030317"/>
<dbReference type="eggNOG" id="KOG4745">
    <property type="taxonomic scope" value="Eukaryota"/>
</dbReference>
<dbReference type="GeneTree" id="ENSGT00940000159798"/>
<dbReference type="HOGENOM" id="CLU_084029_0_0_1"/>
<dbReference type="InParanoid" id="Q9JHB3"/>
<dbReference type="OMA" id="ITTPNEC"/>
<dbReference type="OrthoDB" id="6041373at2759"/>
<dbReference type="PhylomeDB" id="Q9JHB3"/>
<dbReference type="TreeFam" id="TF317409"/>
<dbReference type="BioGRID-ORCS" id="110595">
    <property type="hits" value="1 hit in 76 CRISPR screens"/>
</dbReference>
<dbReference type="ChiTaRS" id="Timp4">
    <property type="organism name" value="mouse"/>
</dbReference>
<dbReference type="PRO" id="PR:Q9JHB3"/>
<dbReference type="Proteomes" id="UP000000589">
    <property type="component" value="Chromosome 6"/>
</dbReference>
<dbReference type="RNAct" id="Q9JHB3">
    <property type="molecule type" value="protein"/>
</dbReference>
<dbReference type="Bgee" id="ENSMUSG00000030317">
    <property type="expression patterns" value="Expressed in prostate gland ventral lobe and 155 other cell types or tissues"/>
</dbReference>
<dbReference type="ExpressionAtlas" id="Q9JHB3">
    <property type="expression patterns" value="baseline and differential"/>
</dbReference>
<dbReference type="GO" id="GO:0005576">
    <property type="term" value="C:extracellular region"/>
    <property type="evidence" value="ECO:0007669"/>
    <property type="project" value="UniProtKB-SubCell"/>
</dbReference>
<dbReference type="GO" id="GO:0008191">
    <property type="term" value="F:metalloendopeptidase inhibitor activity"/>
    <property type="evidence" value="ECO:0007669"/>
    <property type="project" value="InterPro"/>
</dbReference>
<dbReference type="GO" id="GO:0008270">
    <property type="term" value="F:zinc ion binding"/>
    <property type="evidence" value="ECO:0000250"/>
    <property type="project" value="UniProtKB"/>
</dbReference>
<dbReference type="GO" id="GO:0007219">
    <property type="term" value="P:Notch signaling pathway"/>
    <property type="evidence" value="ECO:0000314"/>
    <property type="project" value="MGI"/>
</dbReference>
<dbReference type="CDD" id="cd03585">
    <property type="entry name" value="NTR_TIMP"/>
    <property type="match status" value="1"/>
</dbReference>
<dbReference type="FunFam" id="3.90.370.10:FF:000001">
    <property type="entry name" value="Metalloproteinase inhibitor 3"/>
    <property type="match status" value="1"/>
</dbReference>
<dbReference type="FunFam" id="2.40.50.120:FF:000012">
    <property type="entry name" value="Metalloproteinase inhibitor 4"/>
    <property type="match status" value="1"/>
</dbReference>
<dbReference type="Gene3D" id="2.40.50.120">
    <property type="match status" value="1"/>
</dbReference>
<dbReference type="Gene3D" id="3.90.370.10">
    <property type="entry name" value="Tissue inhibitor of metalloproteinase-1. Chain B, domain 1"/>
    <property type="match status" value="1"/>
</dbReference>
<dbReference type="InterPro" id="IPR001134">
    <property type="entry name" value="Netrin_domain"/>
</dbReference>
<dbReference type="InterPro" id="IPR001820">
    <property type="entry name" value="TIMP"/>
</dbReference>
<dbReference type="InterPro" id="IPR008993">
    <property type="entry name" value="TIMP-like_OB-fold"/>
</dbReference>
<dbReference type="InterPro" id="IPR027465">
    <property type="entry name" value="TIMP_C"/>
</dbReference>
<dbReference type="InterPro" id="IPR030490">
    <property type="entry name" value="TIMP_CS"/>
</dbReference>
<dbReference type="PANTHER" id="PTHR11844">
    <property type="entry name" value="METALLOPROTEASE INHIBITOR"/>
    <property type="match status" value="1"/>
</dbReference>
<dbReference type="PANTHER" id="PTHR11844:SF26">
    <property type="entry name" value="METALLOPROTEINASE INHIBITOR 4"/>
    <property type="match status" value="1"/>
</dbReference>
<dbReference type="Pfam" id="PF00965">
    <property type="entry name" value="TIMP"/>
    <property type="match status" value="1"/>
</dbReference>
<dbReference type="SMART" id="SM00206">
    <property type="entry name" value="NTR"/>
    <property type="match status" value="1"/>
</dbReference>
<dbReference type="SUPFAM" id="SSF50242">
    <property type="entry name" value="TIMP-like"/>
    <property type="match status" value="1"/>
</dbReference>
<dbReference type="PROSITE" id="PS50189">
    <property type="entry name" value="NTR"/>
    <property type="match status" value="1"/>
</dbReference>
<dbReference type="PROSITE" id="PS00288">
    <property type="entry name" value="TIMP"/>
    <property type="match status" value="1"/>
</dbReference>